<gene>
    <name evidence="1" type="primary">luxS</name>
    <name type="ordered locus">OB1107</name>
</gene>
<evidence type="ECO:0000255" key="1">
    <source>
        <dbReference type="HAMAP-Rule" id="MF_00091"/>
    </source>
</evidence>
<accession>Q8CUK0</accession>
<sequence length="153" mass="17166">MTKKMNVESFNLDHTKVKAPYVRLVGVTEGANGDKVHKYDIRIKQPNKAHMEMPGLHSLEHLMAENIRNHSDAVLDIGPMGCQTGFYLSLINHDDYDDVLTMIEKTLEDVLQATEVPACNEVQCGWAANHSLLGAQEIAKEMLNEKASWSEVF</sequence>
<keyword id="KW-0071">Autoinducer synthesis</keyword>
<keyword id="KW-0408">Iron</keyword>
<keyword id="KW-0456">Lyase</keyword>
<keyword id="KW-0479">Metal-binding</keyword>
<keyword id="KW-0673">Quorum sensing</keyword>
<keyword id="KW-1185">Reference proteome</keyword>
<proteinExistence type="inferred from homology"/>
<comment type="function">
    <text evidence="1">Involved in the synthesis of autoinducer 2 (AI-2) which is secreted by bacteria and is used to communicate both the cell density and the metabolic potential of the environment. The regulation of gene expression in response to changes in cell density is called quorum sensing. Catalyzes the transformation of S-ribosylhomocysteine (RHC) to homocysteine (HC) and 4,5-dihydroxy-2,3-pentadione (DPD).</text>
</comment>
<comment type="catalytic activity">
    <reaction evidence="1">
        <text>S-(5-deoxy-D-ribos-5-yl)-L-homocysteine = (S)-4,5-dihydroxypentane-2,3-dione + L-homocysteine</text>
        <dbReference type="Rhea" id="RHEA:17753"/>
        <dbReference type="ChEBI" id="CHEBI:29484"/>
        <dbReference type="ChEBI" id="CHEBI:58195"/>
        <dbReference type="ChEBI" id="CHEBI:58199"/>
        <dbReference type="EC" id="4.4.1.21"/>
    </reaction>
</comment>
<comment type="cofactor">
    <cofactor evidence="1">
        <name>Fe cation</name>
        <dbReference type="ChEBI" id="CHEBI:24875"/>
    </cofactor>
    <text evidence="1">Binds 1 Fe cation per subunit.</text>
</comment>
<comment type="subunit">
    <text evidence="1">Homodimer.</text>
</comment>
<comment type="similarity">
    <text evidence="1">Belongs to the LuxS family.</text>
</comment>
<feature type="chain" id="PRO_0000172241" description="S-ribosylhomocysteine lyase">
    <location>
        <begin position="1"/>
        <end position="153"/>
    </location>
</feature>
<feature type="binding site" evidence="1">
    <location>
        <position position="57"/>
    </location>
    <ligand>
        <name>Fe cation</name>
        <dbReference type="ChEBI" id="CHEBI:24875"/>
    </ligand>
</feature>
<feature type="binding site" evidence="1">
    <location>
        <position position="61"/>
    </location>
    <ligand>
        <name>Fe cation</name>
        <dbReference type="ChEBI" id="CHEBI:24875"/>
    </ligand>
</feature>
<feature type="binding site" evidence="1">
    <location>
        <position position="124"/>
    </location>
    <ligand>
        <name>Fe cation</name>
        <dbReference type="ChEBI" id="CHEBI:24875"/>
    </ligand>
</feature>
<protein>
    <recommendedName>
        <fullName evidence="1">S-ribosylhomocysteine lyase</fullName>
        <ecNumber evidence="1">4.4.1.21</ecNumber>
    </recommendedName>
    <alternativeName>
        <fullName evidence="1">AI-2 synthesis protein</fullName>
    </alternativeName>
    <alternativeName>
        <fullName evidence="1">Autoinducer-2 production protein LuxS</fullName>
    </alternativeName>
</protein>
<name>LUXS_OCEIH</name>
<reference key="1">
    <citation type="journal article" date="2002" name="Nucleic Acids Res.">
        <title>Genome sequence of Oceanobacillus iheyensis isolated from the Iheya Ridge and its unexpected adaptive capabilities to extreme environments.</title>
        <authorList>
            <person name="Takami H."/>
            <person name="Takaki Y."/>
            <person name="Uchiyama I."/>
        </authorList>
    </citation>
    <scope>NUCLEOTIDE SEQUENCE [LARGE SCALE GENOMIC DNA]</scope>
    <source>
        <strain>DSM 14371 / CIP 107618 / JCM 11309 / KCTC 3954 / HTE831</strain>
    </source>
</reference>
<organism>
    <name type="scientific">Oceanobacillus iheyensis (strain DSM 14371 / CIP 107618 / JCM 11309 / KCTC 3954 / HTE831)</name>
    <dbReference type="NCBI Taxonomy" id="221109"/>
    <lineage>
        <taxon>Bacteria</taxon>
        <taxon>Bacillati</taxon>
        <taxon>Bacillota</taxon>
        <taxon>Bacilli</taxon>
        <taxon>Bacillales</taxon>
        <taxon>Bacillaceae</taxon>
        <taxon>Oceanobacillus</taxon>
    </lineage>
</organism>
<dbReference type="EC" id="4.4.1.21" evidence="1"/>
<dbReference type="EMBL" id="BA000028">
    <property type="protein sequence ID" value="BAC13063.1"/>
    <property type="molecule type" value="Genomic_DNA"/>
</dbReference>
<dbReference type="RefSeq" id="WP_011065508.1">
    <property type="nucleotide sequence ID" value="NC_004193.1"/>
</dbReference>
<dbReference type="SMR" id="Q8CUK0"/>
<dbReference type="STRING" id="221109.gene:10733346"/>
<dbReference type="KEGG" id="oih:OB1107"/>
<dbReference type="eggNOG" id="COG1854">
    <property type="taxonomic scope" value="Bacteria"/>
</dbReference>
<dbReference type="HOGENOM" id="CLU_107531_2_0_9"/>
<dbReference type="OrthoDB" id="9788129at2"/>
<dbReference type="PhylomeDB" id="Q8CUK0"/>
<dbReference type="Proteomes" id="UP000000822">
    <property type="component" value="Chromosome"/>
</dbReference>
<dbReference type="GO" id="GO:0005506">
    <property type="term" value="F:iron ion binding"/>
    <property type="evidence" value="ECO:0007669"/>
    <property type="project" value="InterPro"/>
</dbReference>
<dbReference type="GO" id="GO:0043768">
    <property type="term" value="F:S-ribosylhomocysteine lyase activity"/>
    <property type="evidence" value="ECO:0007669"/>
    <property type="project" value="UniProtKB-UniRule"/>
</dbReference>
<dbReference type="GO" id="GO:0009372">
    <property type="term" value="P:quorum sensing"/>
    <property type="evidence" value="ECO:0007669"/>
    <property type="project" value="UniProtKB-UniRule"/>
</dbReference>
<dbReference type="Gene3D" id="3.30.1360.80">
    <property type="entry name" value="S-ribosylhomocysteinase (LuxS)"/>
    <property type="match status" value="1"/>
</dbReference>
<dbReference type="HAMAP" id="MF_00091">
    <property type="entry name" value="LuxS"/>
    <property type="match status" value="1"/>
</dbReference>
<dbReference type="InterPro" id="IPR037005">
    <property type="entry name" value="LuxS_sf"/>
</dbReference>
<dbReference type="InterPro" id="IPR011249">
    <property type="entry name" value="Metalloenz_LuxS/M16"/>
</dbReference>
<dbReference type="InterPro" id="IPR003815">
    <property type="entry name" value="S-ribosylhomocysteinase"/>
</dbReference>
<dbReference type="NCBIfam" id="NF002604">
    <property type="entry name" value="PRK02260.1-4"/>
    <property type="match status" value="1"/>
</dbReference>
<dbReference type="PANTHER" id="PTHR35799">
    <property type="entry name" value="S-RIBOSYLHOMOCYSTEINE LYASE"/>
    <property type="match status" value="1"/>
</dbReference>
<dbReference type="PANTHER" id="PTHR35799:SF1">
    <property type="entry name" value="S-RIBOSYLHOMOCYSTEINE LYASE"/>
    <property type="match status" value="1"/>
</dbReference>
<dbReference type="Pfam" id="PF02664">
    <property type="entry name" value="LuxS"/>
    <property type="match status" value="1"/>
</dbReference>
<dbReference type="PIRSF" id="PIRSF006160">
    <property type="entry name" value="AI2"/>
    <property type="match status" value="1"/>
</dbReference>
<dbReference type="PRINTS" id="PR01487">
    <property type="entry name" value="LUXSPROTEIN"/>
</dbReference>
<dbReference type="SUPFAM" id="SSF63411">
    <property type="entry name" value="LuxS/MPP-like metallohydrolase"/>
    <property type="match status" value="1"/>
</dbReference>